<keyword id="KW-0028">Amino-acid biosynthesis</keyword>
<keyword id="KW-0055">Arginine biosynthesis</keyword>
<keyword id="KW-0067">ATP-binding</keyword>
<keyword id="KW-0963">Cytoplasm</keyword>
<keyword id="KW-0418">Kinase</keyword>
<keyword id="KW-0547">Nucleotide-binding</keyword>
<keyword id="KW-1185">Reference proteome</keyword>
<keyword id="KW-0808">Transferase</keyword>
<organism>
    <name type="scientific">Methanocorpusculum labreanum (strain ATCC 43576 / DSM 4855 / Z)</name>
    <dbReference type="NCBI Taxonomy" id="410358"/>
    <lineage>
        <taxon>Archaea</taxon>
        <taxon>Methanobacteriati</taxon>
        <taxon>Methanobacteriota</taxon>
        <taxon>Stenosarchaea group</taxon>
        <taxon>Methanomicrobia</taxon>
        <taxon>Methanomicrobiales</taxon>
        <taxon>Methanocorpusculaceae</taxon>
        <taxon>Methanocorpusculum</taxon>
    </lineage>
</organism>
<name>ARGB_METLZ</name>
<dbReference type="EC" id="2.7.2.8" evidence="1"/>
<dbReference type="EMBL" id="CP000559">
    <property type="protein sequence ID" value="ABN07802.1"/>
    <property type="molecule type" value="Genomic_DNA"/>
</dbReference>
<dbReference type="RefSeq" id="WP_011834005.1">
    <property type="nucleotide sequence ID" value="NC_008942.1"/>
</dbReference>
<dbReference type="SMR" id="A2STZ6"/>
<dbReference type="STRING" id="410358.Mlab_1641"/>
<dbReference type="GeneID" id="4794455"/>
<dbReference type="KEGG" id="mla:Mlab_1641"/>
<dbReference type="eggNOG" id="arCOG00862">
    <property type="taxonomic scope" value="Archaea"/>
</dbReference>
<dbReference type="HOGENOM" id="CLU_053680_0_0_2"/>
<dbReference type="OrthoDB" id="6816at2157"/>
<dbReference type="UniPathway" id="UPA00068">
    <property type="reaction ID" value="UER00107"/>
</dbReference>
<dbReference type="Proteomes" id="UP000000365">
    <property type="component" value="Chromosome"/>
</dbReference>
<dbReference type="GO" id="GO:0005737">
    <property type="term" value="C:cytoplasm"/>
    <property type="evidence" value="ECO:0007669"/>
    <property type="project" value="UniProtKB-SubCell"/>
</dbReference>
<dbReference type="GO" id="GO:0003991">
    <property type="term" value="F:acetylglutamate kinase activity"/>
    <property type="evidence" value="ECO:0007669"/>
    <property type="project" value="UniProtKB-UniRule"/>
</dbReference>
<dbReference type="GO" id="GO:0005524">
    <property type="term" value="F:ATP binding"/>
    <property type="evidence" value="ECO:0007669"/>
    <property type="project" value="UniProtKB-UniRule"/>
</dbReference>
<dbReference type="GO" id="GO:0042450">
    <property type="term" value="P:arginine biosynthetic process via ornithine"/>
    <property type="evidence" value="ECO:0007669"/>
    <property type="project" value="UniProtKB-UniRule"/>
</dbReference>
<dbReference type="GO" id="GO:0006526">
    <property type="term" value="P:L-arginine biosynthetic process"/>
    <property type="evidence" value="ECO:0007669"/>
    <property type="project" value="UniProtKB-UniPathway"/>
</dbReference>
<dbReference type="CDD" id="cd04250">
    <property type="entry name" value="AAK_NAGK-C"/>
    <property type="match status" value="1"/>
</dbReference>
<dbReference type="FunFam" id="3.40.1160.10:FF:000004">
    <property type="entry name" value="Acetylglutamate kinase"/>
    <property type="match status" value="1"/>
</dbReference>
<dbReference type="Gene3D" id="3.40.1160.10">
    <property type="entry name" value="Acetylglutamate kinase-like"/>
    <property type="match status" value="1"/>
</dbReference>
<dbReference type="HAMAP" id="MF_00082">
    <property type="entry name" value="ArgB"/>
    <property type="match status" value="1"/>
</dbReference>
<dbReference type="InterPro" id="IPR036393">
    <property type="entry name" value="AceGlu_kinase-like_sf"/>
</dbReference>
<dbReference type="InterPro" id="IPR004662">
    <property type="entry name" value="AcgluKinase_fam"/>
</dbReference>
<dbReference type="InterPro" id="IPR037528">
    <property type="entry name" value="ArgB"/>
</dbReference>
<dbReference type="InterPro" id="IPR001048">
    <property type="entry name" value="Asp/Glu/Uridylate_kinase"/>
</dbReference>
<dbReference type="InterPro" id="IPR001057">
    <property type="entry name" value="Glu/AcGlu_kinase"/>
</dbReference>
<dbReference type="InterPro" id="IPR041727">
    <property type="entry name" value="NAGK-C"/>
</dbReference>
<dbReference type="NCBIfam" id="TIGR00761">
    <property type="entry name" value="argB"/>
    <property type="match status" value="1"/>
</dbReference>
<dbReference type="PANTHER" id="PTHR23342">
    <property type="entry name" value="N-ACETYLGLUTAMATE SYNTHASE"/>
    <property type="match status" value="1"/>
</dbReference>
<dbReference type="PANTHER" id="PTHR23342:SF0">
    <property type="entry name" value="N-ACETYLGLUTAMATE SYNTHASE, MITOCHONDRIAL"/>
    <property type="match status" value="1"/>
</dbReference>
<dbReference type="Pfam" id="PF00696">
    <property type="entry name" value="AA_kinase"/>
    <property type="match status" value="1"/>
</dbReference>
<dbReference type="PIRSF" id="PIRSF000728">
    <property type="entry name" value="NAGK"/>
    <property type="match status" value="1"/>
</dbReference>
<dbReference type="PRINTS" id="PR00474">
    <property type="entry name" value="GLU5KINASE"/>
</dbReference>
<dbReference type="SUPFAM" id="SSF53633">
    <property type="entry name" value="Carbamate kinase-like"/>
    <property type="match status" value="1"/>
</dbReference>
<sequence length="295" mass="31550">MNNRQSVLMEALPYIRKFHKKTIVIKLGGHAMVDSAIMNSVVQDAVLLHYVGMRVVLVHGGGPEITLKMKALGKEARFVGGLRVTDEETLEIAQMVLAGKIGNMIVSMIAKNGAKGVGISGNDGGLVIAEKTPIRKMMVGDEEVEVDLGFVGDVKEINSNLLETLLDAGYIPVISPLALDRKGNDLNINADTMAGEIAVALKAFKLISLTDVDGVMNKERTEIFHRLTLKNVDALMSDGTISGGMIPKLEASVNAVRHGVEGAHILNGNSEHNLLLELFTNDGVGTMITASMISL</sequence>
<feature type="chain" id="PRO_0000335675" description="Acetylglutamate kinase">
    <location>
        <begin position="1"/>
        <end position="295"/>
    </location>
</feature>
<feature type="binding site" evidence="1">
    <location>
        <begin position="61"/>
        <end position="62"/>
    </location>
    <ligand>
        <name>substrate</name>
    </ligand>
</feature>
<feature type="binding site" evidence="1">
    <location>
        <position position="83"/>
    </location>
    <ligand>
        <name>substrate</name>
    </ligand>
</feature>
<feature type="binding site" evidence="1">
    <location>
        <position position="187"/>
    </location>
    <ligand>
        <name>substrate</name>
    </ligand>
</feature>
<feature type="site" description="Transition state stabilizer" evidence="1">
    <location>
        <position position="26"/>
    </location>
</feature>
<feature type="site" description="Transition state stabilizer" evidence="1">
    <location>
        <position position="248"/>
    </location>
</feature>
<reference key="1">
    <citation type="journal article" date="2009" name="Stand. Genomic Sci.">
        <title>Complete genome sequence of Methanocorpusculum labreanum type strain Z.</title>
        <authorList>
            <person name="Anderson I.J."/>
            <person name="Sieprawska-Lupa M."/>
            <person name="Goltsman E."/>
            <person name="Lapidus A."/>
            <person name="Copeland A."/>
            <person name="Glavina Del Rio T."/>
            <person name="Tice H."/>
            <person name="Dalin E."/>
            <person name="Barry K."/>
            <person name="Pitluck S."/>
            <person name="Hauser L."/>
            <person name="Land M."/>
            <person name="Lucas S."/>
            <person name="Richardson P."/>
            <person name="Whitman W.B."/>
            <person name="Kyrpides N.C."/>
        </authorList>
    </citation>
    <scope>NUCLEOTIDE SEQUENCE [LARGE SCALE GENOMIC DNA]</scope>
    <source>
        <strain>ATCC 43576 / DSM 4855 / Z</strain>
    </source>
</reference>
<proteinExistence type="inferred from homology"/>
<gene>
    <name evidence="1" type="primary">argB</name>
    <name type="ordered locus">Mlab_1641</name>
</gene>
<comment type="function">
    <text evidence="1">Catalyzes the ATP-dependent phosphorylation of N-acetyl-L-glutamate.</text>
</comment>
<comment type="catalytic activity">
    <reaction evidence="1">
        <text>N-acetyl-L-glutamate + ATP = N-acetyl-L-glutamyl 5-phosphate + ADP</text>
        <dbReference type="Rhea" id="RHEA:14629"/>
        <dbReference type="ChEBI" id="CHEBI:30616"/>
        <dbReference type="ChEBI" id="CHEBI:44337"/>
        <dbReference type="ChEBI" id="CHEBI:57936"/>
        <dbReference type="ChEBI" id="CHEBI:456216"/>
        <dbReference type="EC" id="2.7.2.8"/>
    </reaction>
</comment>
<comment type="pathway">
    <text evidence="1">Amino-acid biosynthesis; L-arginine biosynthesis; N(2)-acetyl-L-ornithine from L-glutamate: step 2/4.</text>
</comment>
<comment type="subcellular location">
    <subcellularLocation>
        <location evidence="1">Cytoplasm</location>
    </subcellularLocation>
</comment>
<comment type="similarity">
    <text evidence="1">Belongs to the acetylglutamate kinase family. ArgB subfamily.</text>
</comment>
<evidence type="ECO:0000255" key="1">
    <source>
        <dbReference type="HAMAP-Rule" id="MF_00082"/>
    </source>
</evidence>
<accession>A2STZ6</accession>
<protein>
    <recommendedName>
        <fullName evidence="1">Acetylglutamate kinase</fullName>
        <ecNumber evidence="1">2.7.2.8</ecNumber>
    </recommendedName>
    <alternativeName>
        <fullName evidence="1">N-acetyl-L-glutamate 5-phosphotransferase</fullName>
    </alternativeName>
    <alternativeName>
        <fullName evidence="1">NAG kinase</fullName>
        <shortName evidence="1">NAGK</shortName>
    </alternativeName>
</protein>